<protein>
    <recommendedName>
        <fullName>Cyclic dof factor 3</fullName>
    </recommendedName>
    <alternativeName>
        <fullName>Dof zinc finger protein DOF3.3</fullName>
        <shortName>AtDOF3.3</shortName>
    </alternativeName>
    <alternativeName>
        <fullName>H-protein promoter-binding factor 2a</fullName>
    </alternativeName>
</protein>
<name>CDF3_ARATH</name>
<sequence>MMMETRDPAIKLFGMKIPFPSVFESAVTVEDDEEDDWSGGDDKSPEKVTPELSDKNNNNCNDNSFNNSKPETLDKEEATSTDQIESSDTPEDNQQTTPDGKTLKKPTKILPCPRCKSMETKFCYYNNYNINQPRHFCKACQRYWTAGGTMRNVPVGAGRRKNKSSSSHYRHITISEALEAARLDPGLQANTRVLSFGLEAQQQHVAAPMTPVMKLQEDQKVSNGARNRFHGLADQRLVARVENGDDCSSGSSVTTSNNHSVDESRAQSGSVVEAQMNNNNNNNMNGYACIPGVPWPYTWNPAMPPPGFYPPPGYPMPFYPYWTIPMLPPHQSSSPISQKCSNTNSPTLGKHPRDEGSSKKDNETERKQKAGCVLVPKTLRIDDPNEAAKSSIWTTLGIKNEAMCKAGGMFKGFDHKTKMYNNDKAENSPVLSANPAALSRSHNFHEQI</sequence>
<organism>
    <name type="scientific">Arabidopsis thaliana</name>
    <name type="common">Mouse-ear cress</name>
    <dbReference type="NCBI Taxonomy" id="3702"/>
    <lineage>
        <taxon>Eukaryota</taxon>
        <taxon>Viridiplantae</taxon>
        <taxon>Streptophyta</taxon>
        <taxon>Embryophyta</taxon>
        <taxon>Tracheophyta</taxon>
        <taxon>Spermatophyta</taxon>
        <taxon>Magnoliopsida</taxon>
        <taxon>eudicotyledons</taxon>
        <taxon>Gunneridae</taxon>
        <taxon>Pentapetalae</taxon>
        <taxon>rosids</taxon>
        <taxon>malvids</taxon>
        <taxon>Brassicales</taxon>
        <taxon>Brassicaceae</taxon>
        <taxon>Camelineae</taxon>
        <taxon>Arabidopsis</taxon>
    </lineage>
</organism>
<gene>
    <name type="primary">CDF3</name>
    <name type="synonym">DOF3.3</name>
    <name type="synonym">HPPBF-2A</name>
    <name type="ordered locus">At3g47500</name>
    <name type="ORF">F1P2.50</name>
</gene>
<feature type="chain" id="PRO_0000074279" description="Cyclic dof factor 3">
    <location>
        <begin position="1"/>
        <end position="448"/>
    </location>
</feature>
<feature type="zinc finger region" description="Dof-type" evidence="2">
    <location>
        <begin position="110"/>
        <end position="164"/>
    </location>
</feature>
<feature type="region of interest" description="Disordered" evidence="3">
    <location>
        <begin position="26"/>
        <end position="108"/>
    </location>
</feature>
<feature type="region of interest" description="Disordered" evidence="3">
    <location>
        <begin position="243"/>
        <end position="269"/>
    </location>
</feature>
<feature type="region of interest" description="Disordered" evidence="3">
    <location>
        <begin position="332"/>
        <end position="370"/>
    </location>
</feature>
<feature type="compositionally biased region" description="Acidic residues" evidence="3">
    <location>
        <begin position="29"/>
        <end position="39"/>
    </location>
</feature>
<feature type="compositionally biased region" description="Basic and acidic residues" evidence="3">
    <location>
        <begin position="40"/>
        <end position="54"/>
    </location>
</feature>
<feature type="compositionally biased region" description="Low complexity" evidence="3">
    <location>
        <begin position="55"/>
        <end position="69"/>
    </location>
</feature>
<feature type="compositionally biased region" description="Polar residues" evidence="3">
    <location>
        <begin position="80"/>
        <end position="99"/>
    </location>
</feature>
<feature type="compositionally biased region" description="Polar residues" evidence="3">
    <location>
        <begin position="246"/>
        <end position="259"/>
    </location>
</feature>
<feature type="compositionally biased region" description="Polar residues" evidence="3">
    <location>
        <begin position="332"/>
        <end position="347"/>
    </location>
</feature>
<feature type="compositionally biased region" description="Basic and acidic residues" evidence="3">
    <location>
        <begin position="351"/>
        <end position="368"/>
    </location>
</feature>
<feature type="binding site" evidence="2">
    <location>
        <position position="112"/>
    </location>
    <ligand>
        <name>Zn(2+)</name>
        <dbReference type="ChEBI" id="CHEBI:29105"/>
    </ligand>
</feature>
<feature type="binding site" evidence="2">
    <location>
        <position position="115"/>
    </location>
    <ligand>
        <name>Zn(2+)</name>
        <dbReference type="ChEBI" id="CHEBI:29105"/>
    </ligand>
</feature>
<feature type="binding site" evidence="2">
    <location>
        <position position="137"/>
    </location>
    <ligand>
        <name>Zn(2+)</name>
        <dbReference type="ChEBI" id="CHEBI:29105"/>
    </ligand>
</feature>
<feature type="binding site" evidence="2">
    <location>
        <position position="140"/>
    </location>
    <ligand>
        <name>Zn(2+)</name>
        <dbReference type="ChEBI" id="CHEBI:29105"/>
    </ligand>
</feature>
<feature type="sequence conflict" description="In Ref. 5; AAM61191." evidence="6" ref="5">
    <original>D</original>
    <variation>E</variation>
    <location>
        <position position="88"/>
    </location>
</feature>
<feature type="sequence conflict" description="In Ref. 5; AAM61191." evidence="6" ref="5">
    <original>Q</original>
    <variation>H</variation>
    <location>
        <position position="201"/>
    </location>
</feature>
<feature type="sequence conflict" description="In Ref. 5; AAM61191." evidence="6" ref="5">
    <location>
        <position position="206"/>
    </location>
</feature>
<feature type="sequence conflict" description="In Ref. 5; AAM61191." evidence="6" ref="5">
    <original>T</original>
    <variation>A</variation>
    <location>
        <position position="210"/>
    </location>
</feature>
<feature type="sequence conflict" description="In Ref. 5; AAM61191." evidence="6" ref="5">
    <original>E</original>
    <variation>G</variation>
    <location>
        <position position="217"/>
    </location>
</feature>
<feature type="sequence conflict" description="In Ref. 5; AAM61191." evidence="6" ref="5">
    <original>R</original>
    <variation>G</variation>
    <location>
        <position position="228"/>
    </location>
</feature>
<feature type="sequence conflict" description="In Ref. 5; AAM61191." evidence="6" ref="5">
    <original>SV</original>
    <variation>RI</variation>
    <location>
        <begin position="270"/>
        <end position="271"/>
    </location>
</feature>
<feature type="sequence conflict" description="In Ref. 5; AAM61191." evidence="6" ref="5">
    <original>A</original>
    <variation>P</variation>
    <location>
        <position position="274"/>
    </location>
</feature>
<feature type="sequence conflict" description="In Ref. 5; AAM61191." evidence="6" ref="5">
    <location>
        <begin position="277"/>
        <end position="278"/>
    </location>
</feature>
<feature type="sequence conflict" description="In Ref. 5; AAM61191." evidence="6" ref="5">
    <original>LP</original>
    <variation>ISPS</variation>
    <location>
        <begin position="327"/>
        <end position="328"/>
    </location>
</feature>
<feature type="sequence conflict" description="In Ref. 5; AAM61191." evidence="6" ref="5">
    <original>C</original>
    <variation>D</variation>
    <location>
        <position position="340"/>
    </location>
</feature>
<feature type="sequence conflict" description="In Ref. 5; AAM61191." evidence="6" ref="5">
    <original>HP</original>
    <variation>RS</variation>
    <location>
        <begin position="351"/>
        <end position="352"/>
    </location>
</feature>
<feature type="sequence conflict" description="In Ref. 5; AAM61191." evidence="6" ref="5">
    <original>G</original>
    <variation>E</variation>
    <location>
        <position position="356"/>
    </location>
</feature>
<feature type="sequence conflict" description="In Ref. 5; AAM61191." evidence="6" ref="5">
    <original>KDN</original>
    <variation>RDS</variation>
    <location>
        <begin position="360"/>
        <end position="362"/>
    </location>
</feature>
<feature type="sequence conflict" description="In Ref. 5; AAM61191." evidence="6" ref="5">
    <original>KA</original>
    <variation>RT</variation>
    <location>
        <begin position="369"/>
        <end position="370"/>
    </location>
</feature>
<feature type="sequence conflict" description="In Ref. 5; AAM61191." evidence="6" ref="5">
    <original>V</original>
    <variation>I</variation>
    <location>
        <position position="373"/>
    </location>
</feature>
<proteinExistence type="evidence at protein level"/>
<reference key="1">
    <citation type="submission" date="1998-07" db="EMBL/GenBank/DDBJ databases">
        <title>Molecular cloning of the H-protein promoter binding factor from Arabidopsis.</title>
        <authorList>
            <person name="Abbaraju H.K.R."/>
            <person name="Oliver D.J."/>
        </authorList>
    </citation>
    <scope>NUCLEOTIDE SEQUENCE [MRNA]</scope>
</reference>
<reference key="2">
    <citation type="journal article" date="2000" name="Nature">
        <title>Sequence and analysis of chromosome 3 of the plant Arabidopsis thaliana.</title>
        <authorList>
            <person name="Salanoubat M."/>
            <person name="Lemcke K."/>
            <person name="Rieger M."/>
            <person name="Ansorge W."/>
            <person name="Unseld M."/>
            <person name="Fartmann B."/>
            <person name="Valle G."/>
            <person name="Bloecker H."/>
            <person name="Perez-Alonso M."/>
            <person name="Obermaier B."/>
            <person name="Delseny M."/>
            <person name="Boutry M."/>
            <person name="Grivell L.A."/>
            <person name="Mache R."/>
            <person name="Puigdomenech P."/>
            <person name="De Simone V."/>
            <person name="Choisne N."/>
            <person name="Artiguenave F."/>
            <person name="Robert C."/>
            <person name="Brottier P."/>
            <person name="Wincker P."/>
            <person name="Cattolico L."/>
            <person name="Weissenbach J."/>
            <person name="Saurin W."/>
            <person name="Quetier F."/>
            <person name="Schaefer M."/>
            <person name="Mueller-Auer S."/>
            <person name="Gabel C."/>
            <person name="Fuchs M."/>
            <person name="Benes V."/>
            <person name="Wurmbach E."/>
            <person name="Drzonek H."/>
            <person name="Erfle H."/>
            <person name="Jordan N."/>
            <person name="Bangert S."/>
            <person name="Wiedelmann R."/>
            <person name="Kranz H."/>
            <person name="Voss H."/>
            <person name="Holland R."/>
            <person name="Brandt P."/>
            <person name="Nyakatura G."/>
            <person name="Vezzi A."/>
            <person name="D'Angelo M."/>
            <person name="Pallavicini A."/>
            <person name="Toppo S."/>
            <person name="Simionati B."/>
            <person name="Conrad A."/>
            <person name="Hornischer K."/>
            <person name="Kauer G."/>
            <person name="Loehnert T.-H."/>
            <person name="Nordsiek G."/>
            <person name="Reichelt J."/>
            <person name="Scharfe M."/>
            <person name="Schoen O."/>
            <person name="Bargues M."/>
            <person name="Terol J."/>
            <person name="Climent J."/>
            <person name="Navarro P."/>
            <person name="Collado C."/>
            <person name="Perez-Perez A."/>
            <person name="Ottenwaelder B."/>
            <person name="Duchemin D."/>
            <person name="Cooke R."/>
            <person name="Laudie M."/>
            <person name="Berger-Llauro C."/>
            <person name="Purnelle B."/>
            <person name="Masuy D."/>
            <person name="de Haan M."/>
            <person name="Maarse A.C."/>
            <person name="Alcaraz J.-P."/>
            <person name="Cottet A."/>
            <person name="Casacuberta E."/>
            <person name="Monfort A."/>
            <person name="Argiriou A."/>
            <person name="Flores M."/>
            <person name="Liguori R."/>
            <person name="Vitale D."/>
            <person name="Mannhaupt G."/>
            <person name="Haase D."/>
            <person name="Schoof H."/>
            <person name="Rudd S."/>
            <person name="Zaccaria P."/>
            <person name="Mewes H.-W."/>
            <person name="Mayer K.F.X."/>
            <person name="Kaul S."/>
            <person name="Town C.D."/>
            <person name="Koo H.L."/>
            <person name="Tallon L.J."/>
            <person name="Jenkins J."/>
            <person name="Rooney T."/>
            <person name="Rizzo M."/>
            <person name="Walts A."/>
            <person name="Utterback T."/>
            <person name="Fujii C.Y."/>
            <person name="Shea T.P."/>
            <person name="Creasy T.H."/>
            <person name="Haas B."/>
            <person name="Maiti R."/>
            <person name="Wu D."/>
            <person name="Peterson J."/>
            <person name="Van Aken S."/>
            <person name="Pai G."/>
            <person name="Militscher J."/>
            <person name="Sellers P."/>
            <person name="Gill J.E."/>
            <person name="Feldblyum T.V."/>
            <person name="Preuss D."/>
            <person name="Lin X."/>
            <person name="Nierman W.C."/>
            <person name="Salzberg S.L."/>
            <person name="White O."/>
            <person name="Venter J.C."/>
            <person name="Fraser C.M."/>
            <person name="Kaneko T."/>
            <person name="Nakamura Y."/>
            <person name="Sato S."/>
            <person name="Kato T."/>
            <person name="Asamizu E."/>
            <person name="Sasamoto S."/>
            <person name="Kimura T."/>
            <person name="Idesawa K."/>
            <person name="Kawashima K."/>
            <person name="Kishida Y."/>
            <person name="Kiyokawa C."/>
            <person name="Kohara M."/>
            <person name="Matsumoto M."/>
            <person name="Matsuno A."/>
            <person name="Muraki A."/>
            <person name="Nakayama S."/>
            <person name="Nakazaki N."/>
            <person name="Shinpo S."/>
            <person name="Takeuchi C."/>
            <person name="Wada T."/>
            <person name="Watanabe A."/>
            <person name="Yamada M."/>
            <person name="Yasuda M."/>
            <person name="Tabata S."/>
        </authorList>
    </citation>
    <scope>NUCLEOTIDE SEQUENCE [LARGE SCALE GENOMIC DNA]</scope>
    <source>
        <strain>cv. Columbia</strain>
    </source>
</reference>
<reference key="3">
    <citation type="journal article" date="2017" name="Plant J.">
        <title>Araport11: a complete reannotation of the Arabidopsis thaliana reference genome.</title>
        <authorList>
            <person name="Cheng C.Y."/>
            <person name="Krishnakumar V."/>
            <person name="Chan A.P."/>
            <person name="Thibaud-Nissen F."/>
            <person name="Schobel S."/>
            <person name="Town C.D."/>
        </authorList>
    </citation>
    <scope>GENOME REANNOTATION</scope>
    <source>
        <strain>cv. Columbia</strain>
    </source>
</reference>
<reference key="4">
    <citation type="journal article" date="2003" name="Science">
        <title>Empirical analysis of transcriptional activity in the Arabidopsis genome.</title>
        <authorList>
            <person name="Yamada K."/>
            <person name="Lim J."/>
            <person name="Dale J.M."/>
            <person name="Chen H."/>
            <person name="Shinn P."/>
            <person name="Palm C.J."/>
            <person name="Southwick A.M."/>
            <person name="Wu H.C."/>
            <person name="Kim C.J."/>
            <person name="Nguyen M."/>
            <person name="Pham P.K."/>
            <person name="Cheuk R.F."/>
            <person name="Karlin-Newmann G."/>
            <person name="Liu S.X."/>
            <person name="Lam B."/>
            <person name="Sakano H."/>
            <person name="Wu T."/>
            <person name="Yu G."/>
            <person name="Miranda M."/>
            <person name="Quach H.L."/>
            <person name="Tripp M."/>
            <person name="Chang C.H."/>
            <person name="Lee J.M."/>
            <person name="Toriumi M.J."/>
            <person name="Chan M.M."/>
            <person name="Tang C.C."/>
            <person name="Onodera C.S."/>
            <person name="Deng J.M."/>
            <person name="Akiyama K."/>
            <person name="Ansari Y."/>
            <person name="Arakawa T."/>
            <person name="Banh J."/>
            <person name="Banno F."/>
            <person name="Bowser L."/>
            <person name="Brooks S.Y."/>
            <person name="Carninci P."/>
            <person name="Chao Q."/>
            <person name="Choy N."/>
            <person name="Enju A."/>
            <person name="Goldsmith A.D."/>
            <person name="Gurjal M."/>
            <person name="Hansen N.F."/>
            <person name="Hayashizaki Y."/>
            <person name="Johnson-Hopson C."/>
            <person name="Hsuan V.W."/>
            <person name="Iida K."/>
            <person name="Karnes M."/>
            <person name="Khan S."/>
            <person name="Koesema E."/>
            <person name="Ishida J."/>
            <person name="Jiang P.X."/>
            <person name="Jones T."/>
            <person name="Kawai J."/>
            <person name="Kamiya A."/>
            <person name="Meyers C."/>
            <person name="Nakajima M."/>
            <person name="Narusaka M."/>
            <person name="Seki M."/>
            <person name="Sakurai T."/>
            <person name="Satou M."/>
            <person name="Tamse R."/>
            <person name="Vaysberg M."/>
            <person name="Wallender E.K."/>
            <person name="Wong C."/>
            <person name="Yamamura Y."/>
            <person name="Yuan S."/>
            <person name="Shinozaki K."/>
            <person name="Davis R.W."/>
            <person name="Theologis A."/>
            <person name="Ecker J.R."/>
        </authorList>
    </citation>
    <scope>NUCLEOTIDE SEQUENCE [LARGE SCALE MRNA]</scope>
    <source>
        <strain>cv. Columbia</strain>
    </source>
</reference>
<reference key="5">
    <citation type="submission" date="2002-03" db="EMBL/GenBank/DDBJ databases">
        <title>Full-length cDNA from Arabidopsis thaliana.</title>
        <authorList>
            <person name="Brover V.V."/>
            <person name="Troukhan M.E."/>
            <person name="Alexandrov N.A."/>
            <person name="Lu Y.-P."/>
            <person name="Flavell R.B."/>
            <person name="Feldmann K.A."/>
        </authorList>
    </citation>
    <scope>NUCLEOTIDE SEQUENCE [LARGE SCALE MRNA]</scope>
</reference>
<reference key="6">
    <citation type="journal article" date="2002" name="Trends Plant Sci.">
        <title>The Dof family of plant transcription factors.</title>
        <authorList>
            <person name="Yanagisawa S."/>
        </authorList>
    </citation>
    <scope>GENE FAMILY</scope>
    <scope>NOMENCLATURE</scope>
</reference>
<reference key="7">
    <citation type="journal article" date="2005" name="Science">
        <title>FKF1 F-box protein mediates cyclic degradation of a repressor of CONSTANS in Arabidopsis.</title>
        <authorList>
            <person name="Imaizumi T."/>
            <person name="Schultz T.F."/>
            <person name="Harmon F.G."/>
            <person name="Ho L.A."/>
            <person name="Kay S.A."/>
        </authorList>
    </citation>
    <scope>INTERACTION WITH ADO2 AND ADO3</scope>
</reference>
<reference key="8">
    <citation type="journal article" date="2009" name="Dev. Cell">
        <title>Arabidopsis DOF transcription factors act redundantly to reduce CONSTANS expression and are essential for a photoperiodic flowering response.</title>
        <authorList>
            <person name="Fornara F."/>
            <person name="Panigrahi K.C."/>
            <person name="Gissot L."/>
            <person name="Sauerbrunn N."/>
            <person name="Ruehl M."/>
            <person name="Jarillo J.A."/>
            <person name="Coupland G."/>
        </authorList>
    </citation>
    <scope>FUNCTION</scope>
    <scope>TISSUE SPECIFICITY</scope>
    <scope>INDUCTION</scope>
    <scope>DISRUPTION PHENOTYPE</scope>
</reference>
<dbReference type="EMBL" id="AF079503">
    <property type="protein sequence ID" value="AAC28390.1"/>
    <property type="molecule type" value="mRNA"/>
</dbReference>
<dbReference type="EMBL" id="AL132955">
    <property type="protein sequence ID" value="CAB61976.1"/>
    <property type="molecule type" value="Genomic_DNA"/>
</dbReference>
<dbReference type="EMBL" id="CP002686">
    <property type="protein sequence ID" value="AEE78290.1"/>
    <property type="molecule type" value="Genomic_DNA"/>
</dbReference>
<dbReference type="EMBL" id="AY065152">
    <property type="protein sequence ID" value="AAL38328.1"/>
    <property type="molecule type" value="mRNA"/>
</dbReference>
<dbReference type="EMBL" id="AY128757">
    <property type="protein sequence ID" value="AAM91157.1"/>
    <property type="molecule type" value="mRNA"/>
</dbReference>
<dbReference type="EMBL" id="AY084628">
    <property type="protein sequence ID" value="AAM61191.1"/>
    <property type="molecule type" value="mRNA"/>
</dbReference>
<dbReference type="PIR" id="T45710">
    <property type="entry name" value="T45710"/>
</dbReference>
<dbReference type="RefSeq" id="NP_190334.1">
    <property type="nucleotide sequence ID" value="NM_114618.4"/>
</dbReference>
<dbReference type="BioGRID" id="9224">
    <property type="interactions" value="2"/>
</dbReference>
<dbReference type="FunCoup" id="Q8LFV3">
    <property type="interactions" value="58"/>
</dbReference>
<dbReference type="IntAct" id="Q8LFV3">
    <property type="interactions" value="10"/>
</dbReference>
<dbReference type="STRING" id="3702.Q8LFV3"/>
<dbReference type="iPTMnet" id="Q8LFV3"/>
<dbReference type="PaxDb" id="3702-AT3G47500.1"/>
<dbReference type="ProteomicsDB" id="220465"/>
<dbReference type="EnsemblPlants" id="AT3G47500.1">
    <property type="protein sequence ID" value="AT3G47500.1"/>
    <property type="gene ID" value="AT3G47500"/>
</dbReference>
<dbReference type="GeneID" id="823904"/>
<dbReference type="Gramene" id="AT3G47500.1">
    <property type="protein sequence ID" value="AT3G47500.1"/>
    <property type="gene ID" value="AT3G47500"/>
</dbReference>
<dbReference type="KEGG" id="ath:AT3G47500"/>
<dbReference type="Araport" id="AT3G47500"/>
<dbReference type="TAIR" id="AT3G47500">
    <property type="gene designation" value="CDF3"/>
</dbReference>
<dbReference type="eggNOG" id="ENOG502QSI8">
    <property type="taxonomic scope" value="Eukaryota"/>
</dbReference>
<dbReference type="HOGENOM" id="CLU_030533_1_0_1"/>
<dbReference type="InParanoid" id="Q8LFV3"/>
<dbReference type="OMA" id="YWTIPML"/>
<dbReference type="PhylomeDB" id="Q8LFV3"/>
<dbReference type="PRO" id="PR:Q8LFV3"/>
<dbReference type="Proteomes" id="UP000006548">
    <property type="component" value="Chromosome 3"/>
</dbReference>
<dbReference type="ExpressionAtlas" id="Q8LFV3">
    <property type="expression patterns" value="baseline and differential"/>
</dbReference>
<dbReference type="GO" id="GO:0005634">
    <property type="term" value="C:nucleus"/>
    <property type="evidence" value="ECO:0007669"/>
    <property type="project" value="UniProtKB-SubCell"/>
</dbReference>
<dbReference type="GO" id="GO:0003677">
    <property type="term" value="F:DNA binding"/>
    <property type="evidence" value="ECO:0007669"/>
    <property type="project" value="UniProtKB-KW"/>
</dbReference>
<dbReference type="GO" id="GO:0003700">
    <property type="term" value="F:DNA-binding transcription factor activity"/>
    <property type="evidence" value="ECO:0000250"/>
    <property type="project" value="TAIR"/>
</dbReference>
<dbReference type="GO" id="GO:0008270">
    <property type="term" value="F:zinc ion binding"/>
    <property type="evidence" value="ECO:0007669"/>
    <property type="project" value="UniProtKB-KW"/>
</dbReference>
<dbReference type="GO" id="GO:0009908">
    <property type="term" value="P:flower development"/>
    <property type="evidence" value="ECO:0007669"/>
    <property type="project" value="UniProtKB-KW"/>
</dbReference>
<dbReference type="GO" id="GO:0006355">
    <property type="term" value="P:regulation of DNA-templated transcription"/>
    <property type="evidence" value="ECO:0000304"/>
    <property type="project" value="TAIR"/>
</dbReference>
<dbReference type="InterPro" id="IPR045174">
    <property type="entry name" value="Dof"/>
</dbReference>
<dbReference type="InterPro" id="IPR003851">
    <property type="entry name" value="Znf_Dof"/>
</dbReference>
<dbReference type="PANTHER" id="PTHR31089">
    <property type="entry name" value="CYCLIC DOF FACTOR 2"/>
    <property type="match status" value="1"/>
</dbReference>
<dbReference type="PANTHER" id="PTHR31089:SF1">
    <property type="entry name" value="CYCLIC DOF FACTOR 3"/>
    <property type="match status" value="1"/>
</dbReference>
<dbReference type="Pfam" id="PF02701">
    <property type="entry name" value="Zn_ribbon_Dof"/>
    <property type="match status" value="1"/>
</dbReference>
<dbReference type="PROSITE" id="PS01361">
    <property type="entry name" value="ZF_DOF_1"/>
    <property type="match status" value="1"/>
</dbReference>
<dbReference type="PROSITE" id="PS50884">
    <property type="entry name" value="ZF_DOF_2"/>
    <property type="match status" value="1"/>
</dbReference>
<keyword id="KW-0238">DNA-binding</keyword>
<keyword id="KW-0287">Flowering</keyword>
<keyword id="KW-0479">Metal-binding</keyword>
<keyword id="KW-0539">Nucleus</keyword>
<keyword id="KW-1185">Reference proteome</keyword>
<keyword id="KW-0804">Transcription</keyword>
<keyword id="KW-0805">Transcription regulation</keyword>
<keyword id="KW-0862">Zinc</keyword>
<keyword id="KW-0863">Zinc-finger</keyword>
<comment type="function">
    <text evidence="1 5">Transcription factor that binds specifically to a 5'-AA[AG]G-3' consensus core sequence (By similarity). Regulates a photoperiodic flowering response. Transcriptional repressor of 'CONSTANS' expression.</text>
</comment>
<comment type="subunit">
    <text evidence="4">Interacts with ADO2 (via kelch repeats) and ADO3 (via kelch repeats).</text>
</comment>
<comment type="interaction">
    <interactant intactId="EBI-1536119">
        <id>Q8LFV3</id>
    </interactant>
    <interactant intactId="EBI-1015688">
        <id>Q8W420</id>
        <label>ADO2</label>
    </interactant>
    <organismsDiffer>false</organismsDiffer>
    <experiments>3</experiments>
</comment>
<comment type="interaction">
    <interactant intactId="EBI-1536119">
        <id>Q8LFV3</id>
    </interactant>
    <interactant intactId="EBI-401228">
        <id>Q9C9W9</id>
        <label>ADO3</label>
    </interactant>
    <organismsDiffer>false</organismsDiffer>
    <experiments>2</experiments>
</comment>
<comment type="subcellular location">
    <subcellularLocation>
        <location evidence="6">Nucleus</location>
    </subcellularLocation>
</comment>
<comment type="tissue specificity">
    <text evidence="5">Expressed in the vasculature of cotyledons and hypocotyls, leaves and roots.</text>
</comment>
<comment type="induction">
    <text evidence="5">Circadian-regulation. Highly expressed at the beginning of the light period, then decreases, reaching a minimum between 16 and 29 hours after dawn before rising again at the end of the day.</text>
</comment>
<comment type="disruption phenotype">
    <text evidence="5">No alteration in flowering time, probably due to the redundancy with CDF1, CDF2 and CDF5.</text>
</comment>
<evidence type="ECO:0000250" key="1"/>
<evidence type="ECO:0000255" key="2">
    <source>
        <dbReference type="PROSITE-ProRule" id="PRU00071"/>
    </source>
</evidence>
<evidence type="ECO:0000256" key="3">
    <source>
        <dbReference type="SAM" id="MobiDB-lite"/>
    </source>
</evidence>
<evidence type="ECO:0000269" key="4">
    <source>
    </source>
</evidence>
<evidence type="ECO:0000269" key="5">
    <source>
    </source>
</evidence>
<evidence type="ECO:0000305" key="6"/>
<accession>Q8LFV3</accession>
<accession>O81600</accession>